<dbReference type="EMBL" id="AC000132">
    <property type="protein sequence ID" value="AAB60748.1"/>
    <property type="status" value="ALT_SEQ"/>
    <property type="molecule type" value="Genomic_DNA"/>
</dbReference>
<dbReference type="EMBL" id="CP002684">
    <property type="protein sequence ID" value="AEE28515.1"/>
    <property type="molecule type" value="Genomic_DNA"/>
</dbReference>
<dbReference type="EMBL" id="DQ446240">
    <property type="protein sequence ID" value="ABE65610.1"/>
    <property type="molecule type" value="mRNA"/>
</dbReference>
<dbReference type="PIR" id="F86233">
    <property type="entry name" value="F86233"/>
</dbReference>
<dbReference type="RefSeq" id="NP_172464.1">
    <property type="nucleotide sequence ID" value="NM_100867.2"/>
</dbReference>
<dbReference type="FunCoup" id="O04514">
    <property type="interactions" value="136"/>
</dbReference>
<dbReference type="STRING" id="3702.O04514"/>
<dbReference type="PaxDb" id="3702-AT1G09930.1"/>
<dbReference type="ProteomicsDB" id="248765"/>
<dbReference type="EnsemblPlants" id="AT1G09930.1">
    <property type="protein sequence ID" value="AT1G09930.1"/>
    <property type="gene ID" value="AT1G09930"/>
</dbReference>
<dbReference type="GeneID" id="837525"/>
<dbReference type="Gramene" id="AT1G09930.1">
    <property type="protein sequence ID" value="AT1G09930.1"/>
    <property type="gene ID" value="AT1G09930"/>
</dbReference>
<dbReference type="KEGG" id="ath:AT1G09930"/>
<dbReference type="Araport" id="AT1G09930"/>
<dbReference type="TAIR" id="AT1G09930">
    <property type="gene designation" value="OPT2"/>
</dbReference>
<dbReference type="eggNOG" id="KOG2262">
    <property type="taxonomic scope" value="Eukaryota"/>
</dbReference>
<dbReference type="HOGENOM" id="CLU_004965_1_1_1"/>
<dbReference type="InParanoid" id="O04514"/>
<dbReference type="OMA" id="FLYCMIG"/>
<dbReference type="OrthoDB" id="9986677at2759"/>
<dbReference type="PhylomeDB" id="O04514"/>
<dbReference type="PRO" id="PR:O04514"/>
<dbReference type="Proteomes" id="UP000006548">
    <property type="component" value="Chromosome 1"/>
</dbReference>
<dbReference type="ExpressionAtlas" id="O04514">
    <property type="expression patterns" value="baseline and differential"/>
</dbReference>
<dbReference type="GO" id="GO:0016020">
    <property type="term" value="C:membrane"/>
    <property type="evidence" value="ECO:0000250"/>
    <property type="project" value="TAIR"/>
</dbReference>
<dbReference type="GO" id="GO:0035673">
    <property type="term" value="F:oligopeptide transmembrane transporter activity"/>
    <property type="evidence" value="ECO:0007669"/>
    <property type="project" value="InterPro"/>
</dbReference>
<dbReference type="GO" id="GO:0015031">
    <property type="term" value="P:protein transport"/>
    <property type="evidence" value="ECO:0007669"/>
    <property type="project" value="UniProtKB-KW"/>
</dbReference>
<dbReference type="InterPro" id="IPR004648">
    <property type="entry name" value="Oligpept_transpt"/>
</dbReference>
<dbReference type="InterPro" id="IPR004813">
    <property type="entry name" value="OPT"/>
</dbReference>
<dbReference type="NCBIfam" id="TIGR00727">
    <property type="entry name" value="ISP4_OPT"/>
    <property type="match status" value="1"/>
</dbReference>
<dbReference type="NCBIfam" id="TIGR00728">
    <property type="entry name" value="OPT_sfam"/>
    <property type="match status" value="1"/>
</dbReference>
<dbReference type="PANTHER" id="PTHR22601">
    <property type="entry name" value="ISP4 LIKE PROTEIN"/>
    <property type="match status" value="1"/>
</dbReference>
<dbReference type="Pfam" id="PF03169">
    <property type="entry name" value="OPT"/>
    <property type="match status" value="1"/>
</dbReference>
<evidence type="ECO:0000250" key="1"/>
<evidence type="ECO:0000255" key="2"/>
<evidence type="ECO:0000269" key="3">
    <source>
    </source>
</evidence>
<evidence type="ECO:0000269" key="4">
    <source>
    </source>
</evidence>
<evidence type="ECO:0000305" key="5"/>
<accession>O04514</accession>
<accession>Q1PFX3</accession>
<gene>
    <name type="primary">OPT2</name>
    <name type="ordered locus">At1g09930</name>
    <name type="ORF">F21M12.32</name>
</gene>
<proteinExistence type="evidence at transcript level"/>
<name>OPT2_ARATH</name>
<feature type="chain" id="PRO_0000213779" description="Oligopeptide transporter 2">
    <location>
        <begin position="1"/>
        <end position="734"/>
    </location>
</feature>
<feature type="transmembrane region" description="Helical" evidence="2">
    <location>
        <begin position="44"/>
        <end position="64"/>
    </location>
</feature>
<feature type="transmembrane region" description="Helical" evidence="2">
    <location>
        <begin position="68"/>
        <end position="88"/>
    </location>
</feature>
<feature type="transmembrane region" description="Helical" evidence="2">
    <location>
        <begin position="125"/>
        <end position="145"/>
    </location>
</feature>
<feature type="transmembrane region" description="Helical" evidence="2">
    <location>
        <begin position="152"/>
        <end position="172"/>
    </location>
</feature>
<feature type="transmembrane region" description="Helical" evidence="2">
    <location>
        <begin position="211"/>
        <end position="231"/>
    </location>
</feature>
<feature type="transmembrane region" description="Helical" evidence="2">
    <location>
        <begin position="252"/>
        <end position="272"/>
    </location>
</feature>
<feature type="transmembrane region" description="Helical" evidence="2">
    <location>
        <begin position="283"/>
        <end position="303"/>
    </location>
</feature>
<feature type="transmembrane region" description="Helical" evidence="2">
    <location>
        <begin position="359"/>
        <end position="379"/>
    </location>
</feature>
<feature type="transmembrane region" description="Helical" evidence="2">
    <location>
        <begin position="414"/>
        <end position="434"/>
    </location>
</feature>
<feature type="transmembrane region" description="Helical" evidence="2">
    <location>
        <begin position="442"/>
        <end position="462"/>
    </location>
</feature>
<feature type="transmembrane region" description="Helical" evidence="2">
    <location>
        <begin position="525"/>
        <end position="545"/>
    </location>
</feature>
<feature type="transmembrane region" description="Helical" evidence="2">
    <location>
        <begin position="596"/>
        <end position="616"/>
    </location>
</feature>
<feature type="transmembrane region" description="Helical" evidence="2">
    <location>
        <begin position="644"/>
        <end position="664"/>
    </location>
</feature>
<feature type="transmembrane region" description="Helical" evidence="2">
    <location>
        <begin position="677"/>
        <end position="697"/>
    </location>
</feature>
<feature type="sequence conflict" description="In Ref. 3; ABE65610." evidence="5" ref="3">
    <original>T</original>
    <variation>I</variation>
    <location>
        <position position="456"/>
    </location>
</feature>
<protein>
    <recommendedName>
        <fullName>Oligopeptide transporter 2</fullName>
        <shortName>AtOPT2</shortName>
    </recommendedName>
</protein>
<sequence>MAAIELHKPEINADDDDDESPVEQVRLTVSNHDDPSLPVWTFRMWFLGLLSCILLSFLNTFFGYRTQPLMITMISVQVVTLPLGKLMARVLPETKYKIGSWEFSFNPGPFNVKEHVLISMFANAGAGFGSGTAYAVGIVDIIMAFYKRKISFLASWILVITTQILGYGWAGIMRKLVVDPAQMWWPTSVLQVSLFRALHEKDNARMSRGKFFVIAFVCSFAWYIFPAYLFLTLSSISWVCWAFPKSITAQQLGSGMSGLGIGAFALDWSVIASYLGSPLVTPFFAIVNVLVGYVLVMYMVIPISYWGMNVYEANKFPIFSSDLFDKQGQLYNISTIVNNKFELDMENYQQQGRVYLSTFFAISYGIGFAAIVSTLTHVALFNGKGIWQQVRASTKAKMDIHTRLMKKYKDIPGWWFYSLLAISLVLSLVLCIFMKDEIQMPWWGLLLASFMALTFTVPVSIITATTNQTPGLNIITEYLMGVLLPGRPIANVCFKTYGYISMSQAISFLNDFKLGHYMKIPPRSMFLVQFIGTVIAGTVNISVAWYLLTSVENICQKELLPPNSPWTCPSDRVFFDASVIWGLVGPKRIFGRLGNYPALNWFFLGGLIGPVLVWLLQKAFPTKTWISQINLPVLLGATAAMPPATSVNFNCWIIVGVIFNYFVFKYCKKWWQRYNYVLSAALDAGLAFMGVLLYFSLTMNGISINHWWGAKGENCPLASCPTAPGVLVDGCPVF</sequence>
<comment type="function">
    <text evidence="1 3 4">Involved in the translocation of tetra- and pentapeptides across the cellular membrane in an energy-dependent manner.</text>
</comment>
<comment type="subcellular location">
    <subcellularLocation>
        <location evidence="5">Membrane</location>
        <topology evidence="5">Multi-pass membrane protein</topology>
    </subcellularLocation>
</comment>
<comment type="tissue specificity">
    <text evidence="3">Expressed in flowers, leaves, roots, and stems.</text>
</comment>
<comment type="induction">
    <text evidence="4">Highly induced by iron deficiency.</text>
</comment>
<comment type="similarity">
    <text evidence="5">Belongs to the oligopeptide OPT transporter (TC 2.A.67.1) family.</text>
</comment>
<comment type="sequence caution" evidence="5">
    <conflict type="erroneous gene model prediction">
        <sequence resource="EMBL-CDS" id="AAB60748"/>
    </conflict>
</comment>
<keyword id="KW-0472">Membrane</keyword>
<keyword id="KW-0571">Peptide transport</keyword>
<keyword id="KW-0653">Protein transport</keyword>
<keyword id="KW-1185">Reference proteome</keyword>
<keyword id="KW-0812">Transmembrane</keyword>
<keyword id="KW-1133">Transmembrane helix</keyword>
<keyword id="KW-0813">Transport</keyword>
<reference key="1">
    <citation type="journal article" date="2000" name="Nature">
        <title>Sequence and analysis of chromosome 1 of the plant Arabidopsis thaliana.</title>
        <authorList>
            <person name="Theologis A."/>
            <person name="Ecker J.R."/>
            <person name="Palm C.J."/>
            <person name="Federspiel N.A."/>
            <person name="Kaul S."/>
            <person name="White O."/>
            <person name="Alonso J."/>
            <person name="Altafi H."/>
            <person name="Araujo R."/>
            <person name="Bowman C.L."/>
            <person name="Brooks S.Y."/>
            <person name="Buehler E."/>
            <person name="Chan A."/>
            <person name="Chao Q."/>
            <person name="Chen H."/>
            <person name="Cheuk R.F."/>
            <person name="Chin C.W."/>
            <person name="Chung M.K."/>
            <person name="Conn L."/>
            <person name="Conway A.B."/>
            <person name="Conway A.R."/>
            <person name="Creasy T.H."/>
            <person name="Dewar K."/>
            <person name="Dunn P."/>
            <person name="Etgu P."/>
            <person name="Feldblyum T.V."/>
            <person name="Feng J.-D."/>
            <person name="Fong B."/>
            <person name="Fujii C.Y."/>
            <person name="Gill J.E."/>
            <person name="Goldsmith A.D."/>
            <person name="Haas B."/>
            <person name="Hansen N.F."/>
            <person name="Hughes B."/>
            <person name="Huizar L."/>
            <person name="Hunter J.L."/>
            <person name="Jenkins J."/>
            <person name="Johnson-Hopson C."/>
            <person name="Khan S."/>
            <person name="Khaykin E."/>
            <person name="Kim C.J."/>
            <person name="Koo H.L."/>
            <person name="Kremenetskaia I."/>
            <person name="Kurtz D.B."/>
            <person name="Kwan A."/>
            <person name="Lam B."/>
            <person name="Langin-Hooper S."/>
            <person name="Lee A."/>
            <person name="Lee J.M."/>
            <person name="Lenz C.A."/>
            <person name="Li J.H."/>
            <person name="Li Y.-P."/>
            <person name="Lin X."/>
            <person name="Liu S.X."/>
            <person name="Liu Z.A."/>
            <person name="Luros J.S."/>
            <person name="Maiti R."/>
            <person name="Marziali A."/>
            <person name="Militscher J."/>
            <person name="Miranda M."/>
            <person name="Nguyen M."/>
            <person name="Nierman W.C."/>
            <person name="Osborne B.I."/>
            <person name="Pai G."/>
            <person name="Peterson J."/>
            <person name="Pham P.K."/>
            <person name="Rizzo M."/>
            <person name="Rooney T."/>
            <person name="Rowley D."/>
            <person name="Sakano H."/>
            <person name="Salzberg S.L."/>
            <person name="Schwartz J.R."/>
            <person name="Shinn P."/>
            <person name="Southwick A.M."/>
            <person name="Sun H."/>
            <person name="Tallon L.J."/>
            <person name="Tambunga G."/>
            <person name="Toriumi M.J."/>
            <person name="Town C.D."/>
            <person name="Utterback T."/>
            <person name="Van Aken S."/>
            <person name="Vaysberg M."/>
            <person name="Vysotskaia V.S."/>
            <person name="Walker M."/>
            <person name="Wu D."/>
            <person name="Yu G."/>
            <person name="Fraser C.M."/>
            <person name="Venter J.C."/>
            <person name="Davis R.W."/>
        </authorList>
    </citation>
    <scope>NUCLEOTIDE SEQUENCE [LARGE SCALE GENOMIC DNA]</scope>
    <source>
        <strain>cv. Columbia</strain>
    </source>
</reference>
<reference key="2">
    <citation type="journal article" date="2017" name="Plant J.">
        <title>Araport11: a complete reannotation of the Arabidopsis thaliana reference genome.</title>
        <authorList>
            <person name="Cheng C.Y."/>
            <person name="Krishnakumar V."/>
            <person name="Chan A.P."/>
            <person name="Thibaud-Nissen F."/>
            <person name="Schobel S."/>
            <person name="Town C.D."/>
        </authorList>
    </citation>
    <scope>GENOME REANNOTATION</scope>
    <source>
        <strain>cv. Columbia</strain>
    </source>
</reference>
<reference key="3">
    <citation type="journal article" date="2006" name="Plant Biotechnol. J.">
        <title>Simultaneous high-throughput recombinational cloning of open reading frames in closed and open configurations.</title>
        <authorList>
            <person name="Underwood B.A."/>
            <person name="Vanderhaeghen R."/>
            <person name="Whitford R."/>
            <person name="Town C.D."/>
            <person name="Hilson P."/>
        </authorList>
    </citation>
    <scope>NUCLEOTIDE SEQUENCE [LARGE SCALE MRNA]</scope>
    <source>
        <strain>cv. Columbia</strain>
    </source>
</reference>
<reference key="4">
    <citation type="journal article" date="2002" name="Plant Physiol.">
        <title>An oligopeptide transporter gene family in Arabidopsis.</title>
        <authorList>
            <person name="Koh S."/>
            <person name="Wiles A.M."/>
            <person name="Sharp J.S."/>
            <person name="Naider F.R."/>
            <person name="Becker J.M."/>
            <person name="Stacey G."/>
        </authorList>
    </citation>
    <scope>FUNCTION</scope>
    <scope>NOMENCLATURE</scope>
    <scope>TISSUE SPECIFICITY</scope>
</reference>
<reference key="5">
    <citation type="journal article" date="2003" name="J. Biol. Chem.">
        <title>Expression profiles of Arabidopsis thaliana in mineral deficiencies reveal novel transporters involved in metal homeostasis.</title>
        <authorList>
            <person name="Wintz H."/>
            <person name="Fox T."/>
            <person name="Wu Y.-Y."/>
            <person name="Feng V."/>
            <person name="Chen W."/>
            <person name="Chang H.-S."/>
            <person name="Zhu T."/>
            <person name="Vulpe C.D."/>
        </authorList>
    </citation>
    <scope>FUNCTION</scope>
    <scope>INDUCTION</scope>
</reference>
<organism>
    <name type="scientific">Arabidopsis thaliana</name>
    <name type="common">Mouse-ear cress</name>
    <dbReference type="NCBI Taxonomy" id="3702"/>
    <lineage>
        <taxon>Eukaryota</taxon>
        <taxon>Viridiplantae</taxon>
        <taxon>Streptophyta</taxon>
        <taxon>Embryophyta</taxon>
        <taxon>Tracheophyta</taxon>
        <taxon>Spermatophyta</taxon>
        <taxon>Magnoliopsida</taxon>
        <taxon>eudicotyledons</taxon>
        <taxon>Gunneridae</taxon>
        <taxon>Pentapetalae</taxon>
        <taxon>rosids</taxon>
        <taxon>malvids</taxon>
        <taxon>Brassicales</taxon>
        <taxon>Brassicaceae</taxon>
        <taxon>Camelineae</taxon>
        <taxon>Arabidopsis</taxon>
    </lineage>
</organism>